<dbReference type="EC" id="3.4.24.-" evidence="1"/>
<dbReference type="EMBL" id="L43967">
    <property type="protein sequence ID" value="AAC72477.1"/>
    <property type="molecule type" value="Genomic_DNA"/>
</dbReference>
<dbReference type="PIR" id="E64250">
    <property type="entry name" value="E64250"/>
</dbReference>
<dbReference type="RefSeq" id="WP_009885575.1">
    <property type="nucleotide sequence ID" value="NC_000908.2"/>
</dbReference>
<dbReference type="SMR" id="P47695"/>
<dbReference type="FunCoup" id="P47695">
    <property type="interactions" value="191"/>
</dbReference>
<dbReference type="STRING" id="243273.MG_457"/>
<dbReference type="GeneID" id="88282638"/>
<dbReference type="KEGG" id="mge:MG_457"/>
<dbReference type="eggNOG" id="COG0465">
    <property type="taxonomic scope" value="Bacteria"/>
</dbReference>
<dbReference type="HOGENOM" id="CLU_000688_16_2_14"/>
<dbReference type="InParanoid" id="P47695"/>
<dbReference type="OrthoDB" id="9809379at2"/>
<dbReference type="BioCyc" id="MGEN243273:G1GJ2-551-MONOMER"/>
<dbReference type="Proteomes" id="UP000000807">
    <property type="component" value="Chromosome"/>
</dbReference>
<dbReference type="GO" id="GO:0005886">
    <property type="term" value="C:plasma membrane"/>
    <property type="evidence" value="ECO:0000318"/>
    <property type="project" value="GO_Central"/>
</dbReference>
<dbReference type="GO" id="GO:0005524">
    <property type="term" value="F:ATP binding"/>
    <property type="evidence" value="ECO:0007669"/>
    <property type="project" value="UniProtKB-UniRule"/>
</dbReference>
<dbReference type="GO" id="GO:0016887">
    <property type="term" value="F:ATP hydrolysis activity"/>
    <property type="evidence" value="ECO:0007669"/>
    <property type="project" value="UniProtKB-UniRule"/>
</dbReference>
<dbReference type="GO" id="GO:0004176">
    <property type="term" value="F:ATP-dependent peptidase activity"/>
    <property type="evidence" value="ECO:0000318"/>
    <property type="project" value="GO_Central"/>
</dbReference>
<dbReference type="GO" id="GO:0004222">
    <property type="term" value="F:metalloendopeptidase activity"/>
    <property type="evidence" value="ECO:0007669"/>
    <property type="project" value="InterPro"/>
</dbReference>
<dbReference type="GO" id="GO:0008270">
    <property type="term" value="F:zinc ion binding"/>
    <property type="evidence" value="ECO:0007669"/>
    <property type="project" value="UniProtKB-UniRule"/>
</dbReference>
<dbReference type="GO" id="GO:0030163">
    <property type="term" value="P:protein catabolic process"/>
    <property type="evidence" value="ECO:0000318"/>
    <property type="project" value="GO_Central"/>
</dbReference>
<dbReference type="GO" id="GO:0006508">
    <property type="term" value="P:proteolysis"/>
    <property type="evidence" value="ECO:0000318"/>
    <property type="project" value="GO_Central"/>
</dbReference>
<dbReference type="CDD" id="cd19501">
    <property type="entry name" value="RecA-like_FtsH"/>
    <property type="match status" value="1"/>
</dbReference>
<dbReference type="FunFam" id="1.10.8.60:FF:000001">
    <property type="entry name" value="ATP-dependent zinc metalloprotease FtsH"/>
    <property type="match status" value="1"/>
</dbReference>
<dbReference type="FunFam" id="1.20.58.760:FF:000001">
    <property type="entry name" value="ATP-dependent zinc metalloprotease FtsH"/>
    <property type="match status" value="1"/>
</dbReference>
<dbReference type="FunFam" id="3.40.50.300:FF:000352">
    <property type="entry name" value="ATP-dependent zinc metalloprotease FTSH 7, chloroplastic"/>
    <property type="match status" value="1"/>
</dbReference>
<dbReference type="Gene3D" id="1.10.8.60">
    <property type="match status" value="1"/>
</dbReference>
<dbReference type="Gene3D" id="3.40.50.300">
    <property type="entry name" value="P-loop containing nucleotide triphosphate hydrolases"/>
    <property type="match status" value="1"/>
</dbReference>
<dbReference type="Gene3D" id="1.20.58.760">
    <property type="entry name" value="Peptidase M41"/>
    <property type="match status" value="1"/>
</dbReference>
<dbReference type="HAMAP" id="MF_01458">
    <property type="entry name" value="FtsH"/>
    <property type="match status" value="1"/>
</dbReference>
<dbReference type="InterPro" id="IPR003593">
    <property type="entry name" value="AAA+_ATPase"/>
</dbReference>
<dbReference type="InterPro" id="IPR041569">
    <property type="entry name" value="AAA_lid_3"/>
</dbReference>
<dbReference type="InterPro" id="IPR003959">
    <property type="entry name" value="ATPase_AAA_core"/>
</dbReference>
<dbReference type="InterPro" id="IPR003960">
    <property type="entry name" value="ATPase_AAA_CS"/>
</dbReference>
<dbReference type="InterPro" id="IPR005936">
    <property type="entry name" value="FtsH"/>
</dbReference>
<dbReference type="InterPro" id="IPR027417">
    <property type="entry name" value="P-loop_NTPase"/>
</dbReference>
<dbReference type="InterPro" id="IPR000642">
    <property type="entry name" value="Peptidase_M41"/>
</dbReference>
<dbReference type="InterPro" id="IPR037219">
    <property type="entry name" value="Peptidase_M41-like"/>
</dbReference>
<dbReference type="NCBIfam" id="TIGR01241">
    <property type="entry name" value="FtsH_fam"/>
    <property type="match status" value="1"/>
</dbReference>
<dbReference type="PANTHER" id="PTHR23076:SF97">
    <property type="entry name" value="ATP-DEPENDENT ZINC METALLOPROTEASE YME1L1"/>
    <property type="match status" value="1"/>
</dbReference>
<dbReference type="PANTHER" id="PTHR23076">
    <property type="entry name" value="METALLOPROTEASE M41 FTSH"/>
    <property type="match status" value="1"/>
</dbReference>
<dbReference type="Pfam" id="PF00004">
    <property type="entry name" value="AAA"/>
    <property type="match status" value="1"/>
</dbReference>
<dbReference type="Pfam" id="PF17862">
    <property type="entry name" value="AAA_lid_3"/>
    <property type="match status" value="1"/>
</dbReference>
<dbReference type="Pfam" id="PF01434">
    <property type="entry name" value="Peptidase_M41"/>
    <property type="match status" value="1"/>
</dbReference>
<dbReference type="SMART" id="SM00382">
    <property type="entry name" value="AAA"/>
    <property type="match status" value="1"/>
</dbReference>
<dbReference type="SUPFAM" id="SSF140990">
    <property type="entry name" value="FtsH protease domain-like"/>
    <property type="match status" value="1"/>
</dbReference>
<dbReference type="SUPFAM" id="SSF52540">
    <property type="entry name" value="P-loop containing nucleoside triphosphate hydrolases"/>
    <property type="match status" value="1"/>
</dbReference>
<dbReference type="PROSITE" id="PS00674">
    <property type="entry name" value="AAA"/>
    <property type="match status" value="1"/>
</dbReference>
<sequence>MKKRNKGLVEQTTTEKNNFSRKTAWKVFWWVIILAVVIGVLAYIFSPRAATAVVESWKLNGGSNSTLTAKVSGFSNELTFKQINGSTYVTDTILQVSITFDGLNSPLTVTAHKTVNSNGNVIFNIANLSINQSNGQITVNSNGTMMNGGSSNNTKSIAGFETLGTFIAPDTRARDVLNGLFGLLPIIIFVVFFLLFWRSARGISAGGREEDNIFSIGKTQAKLAKSTVKFTNIAGLQEEKHELLEIVDYLKNPLKYAQMGARSPRGVILYGPPGTGKTLLAKAVAGEAGVPFFQSTGSGFEDMLVGVGAKRVRDLFNKAKKAAPCIIFIDEIDSVGSKRGRVELSSYSVVEQTLNQLLAEMDGFTSRTGVVVMAATNRLDVLDDALLRPGRFDRHIQINLPDIKEREGILKVHAENKNLSSKISLLDVAKRTPGFSGAQLENVINEATLLAVRDNRTTININDIDEAIDRVIAGPAKKSRVISDEDRKLVAYHEAGHALVGLHVHSNDEVQKITIIPRGQAGGYTLSTPKSGDLNLKRKSDLLAMIATAMGGRAAEEEIYGNLEITTGASSDFYKATNIARAMVTQLGMSKLGQVQYVPSQGTLPSNVKLYSEQTAKDIDNEINFIIEEQYKKAKTIIKSNRKELELLVEALLIAETILKSDIDFIHKNTKLPPEILLQKQEQQAKQKLNKSEVKPESETNS</sequence>
<comment type="function">
    <text evidence="1">Acts as a processive, ATP-dependent zinc metallopeptidase for both cytoplasmic and membrane proteins. Plays a role in the quality control of integral membrane proteins.</text>
</comment>
<comment type="cofactor">
    <cofactor evidence="1">
        <name>Zn(2+)</name>
        <dbReference type="ChEBI" id="CHEBI:29105"/>
    </cofactor>
    <text evidence="1">Binds 1 zinc ion per subunit.</text>
</comment>
<comment type="subunit">
    <text evidence="1">Homohexamer.</text>
</comment>
<comment type="subcellular location">
    <subcellularLocation>
        <location evidence="1">Cell membrane</location>
        <topology evidence="1">Multi-pass membrane protein</topology>
        <orientation evidence="1">Cytoplasmic side</orientation>
    </subcellularLocation>
</comment>
<comment type="similarity">
    <text evidence="1">In the central section; belongs to the AAA ATPase family.</text>
</comment>
<comment type="similarity">
    <text evidence="1">In the C-terminal section; belongs to the peptidase M41 family.</text>
</comment>
<accession>P47695</accession>
<keyword id="KW-0067">ATP-binding</keyword>
<keyword id="KW-1003">Cell membrane</keyword>
<keyword id="KW-0378">Hydrolase</keyword>
<keyword id="KW-0472">Membrane</keyword>
<keyword id="KW-0479">Metal-binding</keyword>
<keyword id="KW-0482">Metalloprotease</keyword>
<keyword id="KW-0547">Nucleotide-binding</keyword>
<keyword id="KW-0645">Protease</keyword>
<keyword id="KW-1185">Reference proteome</keyword>
<keyword id="KW-0812">Transmembrane</keyword>
<keyword id="KW-1133">Transmembrane helix</keyword>
<keyword id="KW-0862">Zinc</keyword>
<feature type="chain" id="PRO_0000084639" description="ATP-dependent zinc metalloprotease FtsH">
    <location>
        <begin position="1"/>
        <end position="702"/>
    </location>
</feature>
<feature type="topological domain" description="Cytoplasmic" evidence="1">
    <location>
        <begin position="1"/>
        <end position="26"/>
    </location>
</feature>
<feature type="transmembrane region" description="Helical" evidence="1">
    <location>
        <begin position="27"/>
        <end position="47"/>
    </location>
</feature>
<feature type="topological domain" description="Extracellular" evidence="1">
    <location>
        <begin position="48"/>
        <end position="175"/>
    </location>
</feature>
<feature type="transmembrane region" description="Helical" evidence="1">
    <location>
        <begin position="176"/>
        <end position="196"/>
    </location>
</feature>
<feature type="topological domain" description="Cytoplasmic" evidence="1">
    <location>
        <begin position="197"/>
        <end position="702"/>
    </location>
</feature>
<feature type="region of interest" description="Disordered" evidence="2">
    <location>
        <begin position="682"/>
        <end position="702"/>
    </location>
</feature>
<feature type="compositionally biased region" description="Basic and acidic residues" evidence="2">
    <location>
        <begin position="690"/>
        <end position="702"/>
    </location>
</feature>
<feature type="active site" evidence="1">
    <location>
        <position position="494"/>
    </location>
</feature>
<feature type="binding site" evidence="1">
    <location>
        <begin position="271"/>
        <end position="278"/>
    </location>
    <ligand>
        <name>ATP</name>
        <dbReference type="ChEBI" id="CHEBI:30616"/>
    </ligand>
</feature>
<feature type="binding site" evidence="1">
    <location>
        <position position="493"/>
    </location>
    <ligand>
        <name>Zn(2+)</name>
        <dbReference type="ChEBI" id="CHEBI:29105"/>
        <note>catalytic</note>
    </ligand>
</feature>
<feature type="binding site" evidence="1">
    <location>
        <position position="497"/>
    </location>
    <ligand>
        <name>Zn(2+)</name>
        <dbReference type="ChEBI" id="CHEBI:29105"/>
        <note>catalytic</note>
    </ligand>
</feature>
<feature type="binding site" evidence="1">
    <location>
        <position position="572"/>
    </location>
    <ligand>
        <name>Zn(2+)</name>
        <dbReference type="ChEBI" id="CHEBI:29105"/>
        <note>catalytic</note>
    </ligand>
</feature>
<organism>
    <name type="scientific">Mycoplasma genitalium (strain ATCC 33530 / DSM 19775 / NCTC 10195 / G37)</name>
    <name type="common">Mycoplasmoides genitalium</name>
    <dbReference type="NCBI Taxonomy" id="243273"/>
    <lineage>
        <taxon>Bacteria</taxon>
        <taxon>Bacillati</taxon>
        <taxon>Mycoplasmatota</taxon>
        <taxon>Mycoplasmoidales</taxon>
        <taxon>Mycoplasmoidaceae</taxon>
        <taxon>Mycoplasmoides</taxon>
    </lineage>
</organism>
<proteinExistence type="inferred from homology"/>
<evidence type="ECO:0000255" key="1">
    <source>
        <dbReference type="HAMAP-Rule" id="MF_01458"/>
    </source>
</evidence>
<evidence type="ECO:0000256" key="2">
    <source>
        <dbReference type="SAM" id="MobiDB-lite"/>
    </source>
</evidence>
<protein>
    <recommendedName>
        <fullName evidence="1">ATP-dependent zinc metalloprotease FtsH</fullName>
        <ecNumber evidence="1">3.4.24.-</ecNumber>
    </recommendedName>
</protein>
<reference key="1">
    <citation type="journal article" date="1995" name="Science">
        <title>The minimal gene complement of Mycoplasma genitalium.</title>
        <authorList>
            <person name="Fraser C.M."/>
            <person name="Gocayne J.D."/>
            <person name="White O."/>
            <person name="Adams M.D."/>
            <person name="Clayton R.A."/>
            <person name="Fleischmann R.D."/>
            <person name="Bult C.J."/>
            <person name="Kerlavage A.R."/>
            <person name="Sutton G.G."/>
            <person name="Kelley J.M."/>
            <person name="Fritchman J.L."/>
            <person name="Weidman J.F."/>
            <person name="Small K.V."/>
            <person name="Sandusky M."/>
            <person name="Fuhrmann J.L."/>
            <person name="Nguyen D.T."/>
            <person name="Utterback T.R."/>
            <person name="Saudek D.M."/>
            <person name="Phillips C.A."/>
            <person name="Merrick J.M."/>
            <person name="Tomb J.-F."/>
            <person name="Dougherty B.A."/>
            <person name="Bott K.F."/>
            <person name="Hu P.-C."/>
            <person name="Lucier T.S."/>
            <person name="Peterson S.N."/>
            <person name="Smith H.O."/>
            <person name="Hutchison C.A. III"/>
            <person name="Venter J.C."/>
        </authorList>
    </citation>
    <scope>NUCLEOTIDE SEQUENCE [LARGE SCALE GENOMIC DNA]</scope>
    <source>
        <strain>ATCC 33530 / DSM 19775 / NCTC 10195 / G37</strain>
    </source>
</reference>
<name>FTSH_MYCGE</name>
<gene>
    <name evidence="1" type="primary">ftsH</name>
    <name type="ordered locus">MG457</name>
</gene>